<accession>A4WIY8</accession>
<dbReference type="EMBL" id="CP000660">
    <property type="protein sequence ID" value="ABP50355.1"/>
    <property type="status" value="ALT_INIT"/>
    <property type="molecule type" value="Genomic_DNA"/>
</dbReference>
<dbReference type="RefSeq" id="WP_128622185.1">
    <property type="nucleotide sequence ID" value="NC_009376.1"/>
</dbReference>
<dbReference type="SMR" id="A4WIY8"/>
<dbReference type="STRING" id="340102.Pars_0769"/>
<dbReference type="GeneID" id="5055121"/>
<dbReference type="KEGG" id="pas:Pars_0769"/>
<dbReference type="HOGENOM" id="CLU_058591_1_1_2"/>
<dbReference type="OrthoDB" id="9126at2157"/>
<dbReference type="Proteomes" id="UP000001567">
    <property type="component" value="Chromosome"/>
</dbReference>
<dbReference type="GO" id="GO:0022627">
    <property type="term" value="C:cytosolic small ribosomal subunit"/>
    <property type="evidence" value="ECO:0007669"/>
    <property type="project" value="TreeGrafter"/>
</dbReference>
<dbReference type="GO" id="GO:0019843">
    <property type="term" value="F:rRNA binding"/>
    <property type="evidence" value="ECO:0007669"/>
    <property type="project" value="UniProtKB-UniRule"/>
</dbReference>
<dbReference type="GO" id="GO:0003735">
    <property type="term" value="F:structural constituent of ribosome"/>
    <property type="evidence" value="ECO:0007669"/>
    <property type="project" value="InterPro"/>
</dbReference>
<dbReference type="GO" id="GO:0006412">
    <property type="term" value="P:translation"/>
    <property type="evidence" value="ECO:0007669"/>
    <property type="project" value="UniProtKB-UniRule"/>
</dbReference>
<dbReference type="CDD" id="cd02411">
    <property type="entry name" value="KH-II_30S_S3_arch"/>
    <property type="match status" value="1"/>
</dbReference>
<dbReference type="FunFam" id="3.30.300.20:FF:000001">
    <property type="entry name" value="30S ribosomal protein S3"/>
    <property type="match status" value="1"/>
</dbReference>
<dbReference type="Gene3D" id="3.30.300.20">
    <property type="match status" value="1"/>
</dbReference>
<dbReference type="Gene3D" id="3.30.1140.32">
    <property type="entry name" value="Ribosomal protein S3, C-terminal domain"/>
    <property type="match status" value="1"/>
</dbReference>
<dbReference type="HAMAP" id="MF_01309_A">
    <property type="entry name" value="Ribosomal_uS3_A"/>
    <property type="match status" value="1"/>
</dbReference>
<dbReference type="InterPro" id="IPR004087">
    <property type="entry name" value="KH_dom"/>
</dbReference>
<dbReference type="InterPro" id="IPR015946">
    <property type="entry name" value="KH_dom-like_a/b"/>
</dbReference>
<dbReference type="InterPro" id="IPR004044">
    <property type="entry name" value="KH_dom_type_2"/>
</dbReference>
<dbReference type="InterPro" id="IPR009019">
    <property type="entry name" value="KH_sf_prok-type"/>
</dbReference>
<dbReference type="InterPro" id="IPR036419">
    <property type="entry name" value="Ribosomal_S3_C_sf"/>
</dbReference>
<dbReference type="InterPro" id="IPR027488">
    <property type="entry name" value="Ribosomal_uS3_arc"/>
</dbReference>
<dbReference type="InterPro" id="IPR001351">
    <property type="entry name" value="Ribosomal_uS3_C"/>
</dbReference>
<dbReference type="InterPro" id="IPR005703">
    <property type="entry name" value="Ribosomal_uS3_euk/arc"/>
</dbReference>
<dbReference type="NCBIfam" id="NF003219">
    <property type="entry name" value="PRK04191.1"/>
    <property type="match status" value="1"/>
</dbReference>
<dbReference type="NCBIfam" id="TIGR01008">
    <property type="entry name" value="uS3_euk_arch"/>
    <property type="match status" value="1"/>
</dbReference>
<dbReference type="PANTHER" id="PTHR11760">
    <property type="entry name" value="30S/40S RIBOSOMAL PROTEIN S3"/>
    <property type="match status" value="1"/>
</dbReference>
<dbReference type="PANTHER" id="PTHR11760:SF32">
    <property type="entry name" value="SMALL RIBOSOMAL SUBUNIT PROTEIN US3"/>
    <property type="match status" value="1"/>
</dbReference>
<dbReference type="Pfam" id="PF07650">
    <property type="entry name" value="KH_2"/>
    <property type="match status" value="1"/>
</dbReference>
<dbReference type="Pfam" id="PF00189">
    <property type="entry name" value="Ribosomal_S3_C"/>
    <property type="match status" value="1"/>
</dbReference>
<dbReference type="SMART" id="SM00322">
    <property type="entry name" value="KH"/>
    <property type="match status" value="1"/>
</dbReference>
<dbReference type="SUPFAM" id="SSF54814">
    <property type="entry name" value="Prokaryotic type KH domain (KH-domain type II)"/>
    <property type="match status" value="1"/>
</dbReference>
<dbReference type="SUPFAM" id="SSF54821">
    <property type="entry name" value="Ribosomal protein S3 C-terminal domain"/>
    <property type="match status" value="1"/>
</dbReference>
<dbReference type="PROSITE" id="PS50823">
    <property type="entry name" value="KH_TYPE_2"/>
    <property type="match status" value="1"/>
</dbReference>
<evidence type="ECO:0000255" key="1">
    <source>
        <dbReference type="HAMAP-Rule" id="MF_01309"/>
    </source>
</evidence>
<evidence type="ECO:0000305" key="2"/>
<comment type="function">
    <text evidence="1">Binds the lower part of the 30S subunit head.</text>
</comment>
<comment type="subunit">
    <text evidence="1">Part of the 30S ribosomal subunit.</text>
</comment>
<comment type="similarity">
    <text evidence="1">Belongs to the universal ribosomal protein uS3 family.</text>
</comment>
<comment type="sequence caution" evidence="2">
    <conflict type="erroneous initiation">
        <sequence resource="EMBL-CDS" id="ABP50355"/>
    </conflict>
    <text>Extended N-terminus.</text>
</comment>
<name>RS3_PYRAR</name>
<sequence length="220" mass="25141">MSVQQRRLPVYKKILEENKKKWMIKEFLEYRLSKYGYIDSEILKTPLGTRIVIYAERPSRIIGRKGAIVKEVSNILATKLGVENPQIDVIDVSKIEAPEMFPKVVAYRIANAMAKGVRFRRVMFAAIRQLTEAGAKGFEIVVSGKLSTERARFEKQTFGKLYKIGYDAKNRVRRAVVHVLLKPGIYGIEVRIAPASLQYSDEYKIKPPVRPEAAAQQQQQ</sequence>
<keyword id="KW-0687">Ribonucleoprotein</keyword>
<keyword id="KW-0689">Ribosomal protein</keyword>
<keyword id="KW-0694">RNA-binding</keyword>
<keyword id="KW-0699">rRNA-binding</keyword>
<protein>
    <recommendedName>
        <fullName evidence="1">Small ribosomal subunit protein uS3</fullName>
    </recommendedName>
    <alternativeName>
        <fullName evidence="2">30S ribosomal protein S3</fullName>
    </alternativeName>
</protein>
<feature type="chain" id="PRO_0000323317" description="Small ribosomal subunit protein uS3">
    <location>
        <begin position="1"/>
        <end position="220"/>
    </location>
</feature>
<feature type="domain" description="KH type-2" evidence="1">
    <location>
        <begin position="24"/>
        <end position="93"/>
    </location>
</feature>
<organism>
    <name type="scientific">Pyrobaculum arsenaticum (strain DSM 13514 / JCM 11321 / PZ6)</name>
    <dbReference type="NCBI Taxonomy" id="340102"/>
    <lineage>
        <taxon>Archaea</taxon>
        <taxon>Thermoproteota</taxon>
        <taxon>Thermoprotei</taxon>
        <taxon>Thermoproteales</taxon>
        <taxon>Thermoproteaceae</taxon>
        <taxon>Pyrobaculum</taxon>
    </lineage>
</organism>
<proteinExistence type="inferred from homology"/>
<gene>
    <name evidence="1" type="primary">rps3</name>
    <name type="ordered locus">Pars_0769</name>
</gene>
<reference key="1">
    <citation type="submission" date="2007-04" db="EMBL/GenBank/DDBJ databases">
        <title>Complete sequence of Pyrobaculum arsenaticum DSM 13514.</title>
        <authorList>
            <consortium name="US DOE Joint Genome Institute"/>
            <person name="Copeland A."/>
            <person name="Lucas S."/>
            <person name="Lapidus A."/>
            <person name="Barry K."/>
            <person name="Glavina del Rio T."/>
            <person name="Dalin E."/>
            <person name="Tice H."/>
            <person name="Pitluck S."/>
            <person name="Chain P."/>
            <person name="Malfatti S."/>
            <person name="Shin M."/>
            <person name="Vergez L."/>
            <person name="Schmutz J."/>
            <person name="Larimer F."/>
            <person name="Land M."/>
            <person name="Hauser L."/>
            <person name="Kyrpides N."/>
            <person name="Mikhailova N."/>
            <person name="Cozen A.E."/>
            <person name="Fitz-Gibbon S.T."/>
            <person name="House C.H."/>
            <person name="Saltikov C."/>
            <person name="Lowe T.M."/>
            <person name="Richardson P."/>
        </authorList>
    </citation>
    <scope>NUCLEOTIDE SEQUENCE [LARGE SCALE GENOMIC DNA]</scope>
    <source>
        <strain>ATCC 700994 / DSM 13514 / JCM 11321 / PZ6</strain>
    </source>
</reference>